<name>LECA_CRAAG</name>
<sequence>ADTIVAVELDTYPNTDIGDPNYQHIGINIKSIRSKATTRWNVQDGKVGTAHISYNSVAKRLSAIVSYPGGSSATVSYDVDLNNILPEWVRVGLSASTGLYKETNTILSWSFTSKLKTNSTADAQSLHFTFNQFSQNPKDLILQGDASTDSDGNLQLTRVSNGSPQSNSVGRALYYAPVHVWDKSAVVASFDATFTFLIKSTDSDIADGIAWFIANTDSSIPHGSGGRLLGLFPDAN</sequence>
<reference key="1">
    <citation type="journal article" date="1999" name="Biochim. Biophys. Acta">
        <title>Molecular characterization and crystallization of Diocleinae lectins.</title>
        <authorList>
            <person name="Calvete J.J."/>
            <person name="Thole H.H."/>
            <person name="Raida M."/>
            <person name="Urbanke C."/>
            <person name="Romero A."/>
            <person name="Grangeiro T.B."/>
            <person name="Ramos M.V."/>
            <person name="Almeida da Rocha I.M."/>
            <person name="Guimaraes F.N."/>
            <person name="Cavada B.S."/>
        </authorList>
    </citation>
    <scope>PROTEIN SEQUENCE</scope>
    <scope>SUBUNIT</scope>
    <scope>MASS SPECTROMETRY</scope>
    <scope>CRYSTALLIZATION</scope>
    <scope>PRELIMINARY X-RAY CRYSTALLOGRAPHY (3.5 ANGSTROMS)</scope>
    <source>
        <tissue>Seed</tissue>
    </source>
</reference>
<reference key="2">
    <citation type="journal article" date="1999" name="Protein Pept. Lett.">
        <title>Primary structure and kinetic interaction with glycoproteins of the lectin from seeds of Cratylia floribunda.</title>
        <authorList>
            <person name="Cavada B.S."/>
            <person name="Nogueira N.A.P."/>
            <person name="Farias C.M.A.S."/>
            <person name="Grangeiro T.B."/>
            <person name="Romas M.V."/>
            <person name="Thole H.H."/>
            <person name="Raida M."/>
            <person name="Rouge P."/>
            <person name="Calvete J.J."/>
        </authorList>
    </citation>
    <scope>PROTEIN SEQUENCE</scope>
    <source>
        <tissue>Seed</tissue>
    </source>
</reference>
<reference key="3">
    <citation type="journal article" date="1992" name="Immunol. Invest.">
        <title>Human lymphocyte stimulation by legume lectins from the Diocleae tribe.</title>
        <authorList>
            <person name="Barral-Netto M."/>
            <person name="Santos S.B."/>
            <person name="Barral A."/>
            <person name="Moreira L.I."/>
            <person name="Santos C.F."/>
            <person name="Moreira R.A."/>
            <person name="Oliveira J.T."/>
            <person name="Cavada B.S."/>
        </authorList>
    </citation>
    <scope>FUNCTION</scope>
</reference>
<reference key="4">
    <citation type="journal article" date="1994" name="Agents Actions">
        <title>Histamine release induced by glucose (mannose)-specific lectins isolated from Brazilian beans. Comparison with concanavalin A.</title>
        <authorList>
            <person name="Gomes J.C."/>
            <person name="Ferreira R.R."/>
            <person name="Cavada B.S."/>
            <person name="Moreira R.A."/>
            <person name="Oliveira J.T."/>
        </authorList>
    </citation>
    <scope>FUNCTION</scope>
    <scope>CALCIUM-BINDING</scope>
</reference>
<reference key="5">
    <citation type="journal article" date="1997" name="Mediators Inflamm.">
        <title>Anti-inflammatory effect of glucose-mannose binding lectins isolated from Brazilian beans.</title>
        <authorList>
            <person name="Assreuy A.M."/>
            <person name="Shibuya M.D."/>
            <person name="Martins G.J."/>
            <person name="De Souza M.L."/>
            <person name="Cavada B.S."/>
            <person name="Moreira R.A."/>
            <person name="Oliveira J.T."/>
            <person name="Ribeiro R.A."/>
            <person name="Flores C.A."/>
        </authorList>
    </citation>
    <scope>FUNCTION</scope>
</reference>
<reference key="6">
    <citation type="journal article" date="1998" name="J. Biol. Chem.">
        <title>Diocleinae lectins are a group of proteins with conserved binding sites for the core trimannoside of asparagine-linked oligosaccharides and differential specificities for complex carbohydrates.</title>
        <authorList>
            <person name="Dam T.K."/>
            <person name="Cavada B.S."/>
            <person name="Grangeiro T.B."/>
            <person name="Santos C.F."/>
            <person name="de Sousa F.A.M."/>
            <person name="Oscarson S."/>
            <person name="Brewer C.F."/>
        </authorList>
    </citation>
    <scope>FUNCTION</scope>
</reference>
<reference key="7">
    <citation type="journal article" date="2000" name="Biochemistry">
        <title>Demonstration of a conserved histidine and two water ligands at the Mn2+ site in Diocleinae lectins by pulsed EPR spectroscopy.</title>
        <authorList>
            <person name="Lee H.C."/>
            <person name="Goroncy A.K."/>
            <person name="Peisach J."/>
            <person name="Cavada B.S."/>
            <person name="Grangeiro T.B."/>
            <person name="Ramos M.V."/>
            <person name="Sampaio A.H."/>
            <person name="Dam T.K."/>
            <person name="Brewer C.F."/>
        </authorList>
    </citation>
    <scope>MANGANESE-BINDING</scope>
</reference>
<reference key="8">
    <citation type="journal article" date="2000" name="J. Biol. Chem.">
        <title>Thermodynamic binding studies of lectins from the diocleinae subtribe to deoxy analogs of the core trimannoside of asparagine-linked oligosaccharides.</title>
        <authorList>
            <person name="Dam T.K."/>
            <person name="Cavada B.S."/>
            <person name="Grangeiro T.B."/>
            <person name="Santos C.F."/>
            <person name="Ceccatto V.M."/>
            <person name="de Sousa F.A."/>
            <person name="Oscarson S."/>
            <person name="Brewer C.F."/>
        </authorList>
    </citation>
    <scope>FUNCTION</scope>
</reference>
<reference key="9">
    <citation type="journal article" date="2010" name="Bioresour. Technol.">
        <title>Toxicity of some glucose/mannose-binding lectins to Biomphalaria glabrata and Artemia salina.</title>
        <authorList>
            <person name="dos Santos A.F."/>
            <person name="Cavada B.S."/>
            <person name="da Rocha B.A."/>
            <person name="do Nascimento K.S."/>
            <person name="Sant'Ana A.E."/>
        </authorList>
    </citation>
    <scope>TOXIC DOSE</scope>
</reference>
<protein>
    <recommendedName>
        <fullName>Lectin alpha chain</fullName>
    </recommendedName>
    <component>
        <recommendedName>
            <fullName>Lectin beta chain</fullName>
        </recommendedName>
    </component>
    <component>
        <recommendedName>
            <fullName>Lectin gamma chain</fullName>
        </recommendedName>
    </component>
</protein>
<proteinExistence type="evidence at protein level"/>
<feature type="chain" id="PRO_0000017588" description="Lectin alpha chain">
    <location>
        <begin position="1"/>
        <end position="236"/>
    </location>
</feature>
<feature type="chain" id="PRO_0000017589" description="Lectin beta chain">
    <location>
        <begin position="1"/>
        <end position="118"/>
    </location>
</feature>
<feature type="chain" id="PRO_0000017590" description="Lectin gamma chain">
    <location>
        <begin position="119"/>
        <end position="236"/>
    </location>
</feature>
<feature type="binding site" evidence="1">
    <location>
        <position position="8"/>
    </location>
    <ligand>
        <name>Mn(2+)</name>
        <dbReference type="ChEBI" id="CHEBI:29035"/>
    </ligand>
</feature>
<feature type="binding site" evidence="1">
    <location>
        <position position="10"/>
    </location>
    <ligand>
        <name>Ca(2+)</name>
        <dbReference type="ChEBI" id="CHEBI:29108"/>
    </ligand>
</feature>
<feature type="binding site" evidence="1">
    <location>
        <position position="10"/>
    </location>
    <ligand>
        <name>Mn(2+)</name>
        <dbReference type="ChEBI" id="CHEBI:29035"/>
    </ligand>
</feature>
<feature type="binding site" evidence="1">
    <location>
        <position position="12"/>
    </location>
    <ligand>
        <name>a carbohydrate</name>
        <dbReference type="ChEBI" id="CHEBI:16646"/>
    </ligand>
</feature>
<feature type="binding site" evidence="1">
    <location>
        <position position="12"/>
    </location>
    <ligand>
        <name>Ca(2+)</name>
        <dbReference type="ChEBI" id="CHEBI:29108"/>
    </ligand>
</feature>
<feature type="binding site" evidence="1">
    <location>
        <position position="14"/>
    </location>
    <ligand>
        <name>Ca(2+)</name>
        <dbReference type="ChEBI" id="CHEBI:29108"/>
    </ligand>
</feature>
<feature type="binding site" evidence="1">
    <location>
        <position position="19"/>
    </location>
    <ligand>
        <name>Ca(2+)</name>
        <dbReference type="ChEBI" id="CHEBI:29108"/>
    </ligand>
</feature>
<feature type="binding site" evidence="1">
    <location>
        <position position="19"/>
    </location>
    <ligand>
        <name>Mn(2+)</name>
        <dbReference type="ChEBI" id="CHEBI:29035"/>
    </ligand>
</feature>
<feature type="binding site" evidence="1">
    <location>
        <position position="24"/>
    </location>
    <ligand>
        <name>Mn(2+)</name>
        <dbReference type="ChEBI" id="CHEBI:29035"/>
    </ligand>
</feature>
<feature type="binding site" evidence="1">
    <location>
        <position position="34"/>
    </location>
    <ligand>
        <name>Mn(2+)</name>
        <dbReference type="ChEBI" id="CHEBI:29035"/>
    </ligand>
</feature>
<feature type="binding site" evidence="1">
    <location>
        <begin position="99"/>
        <end position="100"/>
    </location>
    <ligand>
        <name>a carbohydrate</name>
        <dbReference type="ChEBI" id="CHEBI:16646"/>
    </ligand>
</feature>
<feature type="binding site" evidence="1">
    <location>
        <position position="207"/>
    </location>
    <ligand>
        <name>Ca(2+)</name>
        <dbReference type="ChEBI" id="CHEBI:29108"/>
    </ligand>
</feature>
<feature type="binding site" evidence="1">
    <location>
        <position position="227"/>
    </location>
    <ligand>
        <name>a carbohydrate</name>
        <dbReference type="ChEBI" id="CHEBI:16646"/>
    </ligand>
</feature>
<feature type="strand" evidence="10">
    <location>
        <begin position="5"/>
        <end position="10"/>
    </location>
</feature>
<feature type="helix" evidence="10">
    <location>
        <begin position="15"/>
        <end position="17"/>
    </location>
</feature>
<feature type="strand" evidence="10">
    <location>
        <begin position="24"/>
        <end position="33"/>
    </location>
</feature>
<feature type="strand" evidence="10">
    <location>
        <begin position="35"/>
        <end position="39"/>
    </location>
</feature>
<feature type="strand" evidence="10">
    <location>
        <begin position="47"/>
        <end position="55"/>
    </location>
</feature>
<feature type="turn" evidence="10">
    <location>
        <begin position="56"/>
        <end position="59"/>
    </location>
</feature>
<feature type="strand" evidence="10">
    <location>
        <begin position="60"/>
        <end position="67"/>
    </location>
</feature>
<feature type="turn" evidence="10">
    <location>
        <begin position="68"/>
        <end position="70"/>
    </location>
</feature>
<feature type="strand" evidence="10">
    <location>
        <begin position="71"/>
        <end position="78"/>
    </location>
</feature>
<feature type="helix" evidence="10">
    <location>
        <begin position="81"/>
        <end position="83"/>
    </location>
</feature>
<feature type="strand" evidence="10">
    <location>
        <begin position="87"/>
        <end position="96"/>
    </location>
</feature>
<feature type="strand" evidence="10">
    <location>
        <begin position="105"/>
        <end position="116"/>
    </location>
</feature>
<feature type="strand" evidence="10">
    <location>
        <begin position="118"/>
        <end position="121"/>
    </location>
</feature>
<feature type="strand" evidence="10">
    <location>
        <begin position="123"/>
        <end position="132"/>
    </location>
</feature>
<feature type="strand" evidence="10">
    <location>
        <begin position="140"/>
        <end position="144"/>
    </location>
</feature>
<feature type="strand" evidence="10">
    <location>
        <begin position="154"/>
        <end position="157"/>
    </location>
</feature>
<feature type="strand" evidence="10">
    <location>
        <begin position="169"/>
        <end position="176"/>
    </location>
</feature>
<feature type="strand" evidence="10">
    <location>
        <begin position="186"/>
        <end position="197"/>
    </location>
</feature>
<feature type="strand" evidence="10">
    <location>
        <begin position="201"/>
        <end position="204"/>
    </location>
</feature>
<feature type="strand" evidence="10">
    <location>
        <begin position="208"/>
        <end position="214"/>
    </location>
</feature>
<feature type="helix" evidence="10">
    <location>
        <begin position="226"/>
        <end position="228"/>
    </location>
</feature>
<feature type="turn" evidence="10">
    <location>
        <begin position="229"/>
        <end position="231"/>
    </location>
</feature>
<organism>
    <name type="scientific">Cratylia argentea</name>
    <name type="common">Cratylia floribunda</name>
    <dbReference type="NCBI Taxonomy" id="83131"/>
    <lineage>
        <taxon>Eukaryota</taxon>
        <taxon>Viridiplantae</taxon>
        <taxon>Streptophyta</taxon>
        <taxon>Embryophyta</taxon>
        <taxon>Tracheophyta</taxon>
        <taxon>Spermatophyta</taxon>
        <taxon>Magnoliopsida</taxon>
        <taxon>eudicotyledons</taxon>
        <taxon>Gunneridae</taxon>
        <taxon>Pentapetalae</taxon>
        <taxon>rosids</taxon>
        <taxon>fabids</taxon>
        <taxon>Fabales</taxon>
        <taxon>Fabaceae</taxon>
        <taxon>Papilionoideae</taxon>
        <taxon>50 kb inversion clade</taxon>
        <taxon>NPAAA clade</taxon>
        <taxon>indigoferoid/millettioid clade</taxon>
        <taxon>Phaseoleae</taxon>
        <taxon>Cratylia</taxon>
    </lineage>
</organism>
<evidence type="ECO:0000250" key="1"/>
<evidence type="ECO:0000269" key="2">
    <source>
    </source>
</evidence>
<evidence type="ECO:0000269" key="3">
    <source>
    </source>
</evidence>
<evidence type="ECO:0000269" key="4">
    <source>
    </source>
</evidence>
<evidence type="ECO:0000269" key="5">
    <source>
    </source>
</evidence>
<evidence type="ECO:0000269" key="6">
    <source>
    </source>
</evidence>
<evidence type="ECO:0000269" key="7">
    <source>
    </source>
</evidence>
<evidence type="ECO:0000269" key="8">
    <source>
    </source>
</evidence>
<evidence type="ECO:0000305" key="9"/>
<evidence type="ECO:0007829" key="10">
    <source>
        <dbReference type="PDB" id="2D3P"/>
    </source>
</evidence>
<comment type="function">
    <text evidence="3 4 5 7 8">D-mannose/D-glucose-binding lectin. Has anti-inflammatory activity in rats. Induces histamine release in mast cells from rat. Induces lymphocyte proliferation and IFNG production.</text>
</comment>
<comment type="subunit">
    <text evidence="2">Equilibrium between homodimer and homotetramer. Oligomerization is pH-dependent with homotetramers forming at pH 6.5 and above.</text>
</comment>
<comment type="tissue specificity">
    <text>Seed.</text>
</comment>
<comment type="PTM">
    <text>The beta and gamma chains are produced by partial proteolytic processing of the lectin alpha chain by an asparaginyl endopeptidase. Mixture of 60% alpha lectin and 40% of its beta and gamma proteolytic fragments.</text>
</comment>
<comment type="mass spectrometry">
    <molecule>Lectin alpha chain</molecule>
</comment>
<comment type="mass spectrometry">
    <molecule>Lectin beta chain</molecule>
</comment>
<comment type="mass spectrometry">
    <molecule>Lectin gamma chain</molecule>
</comment>
<comment type="toxic dose">
    <text evidence="6">LD(50) is 4.75 ug/ml against the brine shrimp A.salina.</text>
</comment>
<comment type="toxic dose">
    <text evidence="6">LD(50) is 25.5 ug/ml against the aquatic snail B.glabrata.</text>
</comment>
<comment type="miscellaneous">
    <text>Binds one manganese (or another transition metal) ion and one calcium ion. The metal ions are essential for the saccharide-binding and cell-agglutinating activities.</text>
</comment>
<comment type="miscellaneous">
    <text>Is being tested as a molluscicide with potential application in controlling schistosomiasis. The causative agent of schistosomiasis depends on freshwater snails of the genus Biomphalaria as hosts during its larval stages.</text>
</comment>
<comment type="similarity">
    <text evidence="9">Belongs to the leguminous lectin family.</text>
</comment>
<accession>P81517</accession>
<accession>P81636</accession>
<keyword id="KW-0002">3D-structure</keyword>
<keyword id="KW-0106">Calcium</keyword>
<keyword id="KW-0903">Direct protein sequencing</keyword>
<keyword id="KW-0430">Lectin</keyword>
<keyword id="KW-0464">Manganese</keyword>
<keyword id="KW-0465">Mannose-binding</keyword>
<keyword id="KW-0479">Metal-binding</keyword>
<keyword id="KW-0800">Toxin</keyword>
<dbReference type="PDB" id="2D3P">
    <property type="method" value="X-ray"/>
    <property type="resolution" value="2.80 A"/>
    <property type="chains" value="A/B/C/D=1-236"/>
</dbReference>
<dbReference type="PDB" id="2D3R">
    <property type="method" value="X-ray"/>
    <property type="resolution" value="2.90 A"/>
    <property type="chains" value="A/B/C/D=1-236"/>
</dbReference>
<dbReference type="PDBsum" id="2D3P"/>
<dbReference type="PDBsum" id="2D3R"/>
<dbReference type="SMR" id="P81517"/>
<dbReference type="UniLectin" id="P81517"/>
<dbReference type="EvolutionaryTrace" id="P81517"/>
<dbReference type="GO" id="GO:0030246">
    <property type="term" value="F:carbohydrate binding"/>
    <property type="evidence" value="ECO:0000314"/>
    <property type="project" value="UniProtKB"/>
</dbReference>
<dbReference type="GO" id="GO:0005537">
    <property type="term" value="F:D-mannose binding"/>
    <property type="evidence" value="ECO:0007669"/>
    <property type="project" value="UniProtKB-KW"/>
</dbReference>
<dbReference type="GO" id="GO:0046872">
    <property type="term" value="F:metal ion binding"/>
    <property type="evidence" value="ECO:0007669"/>
    <property type="project" value="UniProtKB-KW"/>
</dbReference>
<dbReference type="GO" id="GO:0090729">
    <property type="term" value="F:toxin activity"/>
    <property type="evidence" value="ECO:0007669"/>
    <property type="project" value="UniProtKB-KW"/>
</dbReference>
<dbReference type="CDD" id="cd06899">
    <property type="entry name" value="lectin_legume_LecRK_Arcelin_ConA"/>
    <property type="match status" value="1"/>
</dbReference>
<dbReference type="FunFam" id="2.60.120.200:FF:000227">
    <property type="entry name" value="Concanavalin-A"/>
    <property type="match status" value="1"/>
</dbReference>
<dbReference type="Gene3D" id="2.60.120.200">
    <property type="match status" value="1"/>
</dbReference>
<dbReference type="InterPro" id="IPR013320">
    <property type="entry name" value="ConA-like_dom_sf"/>
</dbReference>
<dbReference type="InterPro" id="IPR000985">
    <property type="entry name" value="Lectin_LegA_CS"/>
</dbReference>
<dbReference type="InterPro" id="IPR019825">
    <property type="entry name" value="Lectin_legB_Mn/Ca_BS"/>
</dbReference>
<dbReference type="InterPro" id="IPR001220">
    <property type="entry name" value="Legume_lectin_dom"/>
</dbReference>
<dbReference type="InterPro" id="IPR050258">
    <property type="entry name" value="Leguminous_Lectin"/>
</dbReference>
<dbReference type="PANTHER" id="PTHR32401">
    <property type="entry name" value="CONCANAVALIN A-LIKE LECTIN FAMILY PROTEIN"/>
    <property type="match status" value="1"/>
</dbReference>
<dbReference type="PANTHER" id="PTHR32401:SF47">
    <property type="entry name" value="LEGUME LECTIN DOMAIN-CONTAINING PROTEIN"/>
    <property type="match status" value="1"/>
</dbReference>
<dbReference type="Pfam" id="PF00139">
    <property type="entry name" value="Lectin_legB"/>
    <property type="match status" value="2"/>
</dbReference>
<dbReference type="SUPFAM" id="SSF49899">
    <property type="entry name" value="Concanavalin A-like lectins/glucanases"/>
    <property type="match status" value="1"/>
</dbReference>
<dbReference type="PROSITE" id="PS00308">
    <property type="entry name" value="LECTIN_LEGUME_ALPHA"/>
    <property type="match status" value="1"/>
</dbReference>
<dbReference type="PROSITE" id="PS00307">
    <property type="entry name" value="LECTIN_LEGUME_BETA"/>
    <property type="match status" value="1"/>
</dbReference>